<protein>
    <recommendedName>
        <fullName evidence="1">DNA-directed RNA polymerase subunit beta</fullName>
        <shortName evidence="1">RNAP subunit beta</shortName>
        <ecNumber evidence="1">2.7.7.6</ecNumber>
    </recommendedName>
    <alternativeName>
        <fullName evidence="1">RNA polymerase subunit beta</fullName>
    </alternativeName>
    <alternativeName>
        <fullName evidence="1">Transcriptase subunit beta</fullName>
    </alternativeName>
</protein>
<keyword id="KW-0002">3D-structure</keyword>
<keyword id="KW-0240">DNA-directed RNA polymerase</keyword>
<keyword id="KW-0548">Nucleotidyltransferase</keyword>
<keyword id="KW-1185">Reference proteome</keyword>
<keyword id="KW-0804">Transcription</keyword>
<keyword id="KW-0808">Transferase</keyword>
<organism>
    <name type="scientific">Caulobacter vibrioides (strain NA1000 / CB15N)</name>
    <name type="common">Caulobacter crescentus</name>
    <dbReference type="NCBI Taxonomy" id="565050"/>
    <lineage>
        <taxon>Bacteria</taxon>
        <taxon>Pseudomonadati</taxon>
        <taxon>Pseudomonadota</taxon>
        <taxon>Alphaproteobacteria</taxon>
        <taxon>Caulobacterales</taxon>
        <taxon>Caulobacteraceae</taxon>
        <taxon>Caulobacter</taxon>
    </lineage>
</organism>
<comment type="function">
    <text evidence="1">DNA-dependent RNA polymerase catalyzes the transcription of DNA into RNA using the four ribonucleoside triphosphates as substrates.</text>
</comment>
<comment type="catalytic activity">
    <reaction evidence="1">
        <text>RNA(n) + a ribonucleoside 5'-triphosphate = RNA(n+1) + diphosphate</text>
        <dbReference type="Rhea" id="RHEA:21248"/>
        <dbReference type="Rhea" id="RHEA-COMP:14527"/>
        <dbReference type="Rhea" id="RHEA-COMP:17342"/>
        <dbReference type="ChEBI" id="CHEBI:33019"/>
        <dbReference type="ChEBI" id="CHEBI:61557"/>
        <dbReference type="ChEBI" id="CHEBI:140395"/>
        <dbReference type="EC" id="2.7.7.6"/>
    </reaction>
</comment>
<comment type="subunit">
    <text evidence="1">The RNAP catalytic core consists of 2 alpha, 1 beta, 1 beta' and 1 omega subunit. When a sigma factor is associated with the core the holoenzyme is formed, which can initiate transcription.</text>
</comment>
<comment type="similarity">
    <text evidence="1">Belongs to the RNA polymerase beta chain family.</text>
</comment>
<reference key="1">
    <citation type="journal article" date="2010" name="J. Bacteriol.">
        <title>The genetic basis of laboratory adaptation in Caulobacter crescentus.</title>
        <authorList>
            <person name="Marks M.E."/>
            <person name="Castro-Rojas C.M."/>
            <person name="Teiling C."/>
            <person name="Du L."/>
            <person name="Kapatral V."/>
            <person name="Walunas T.L."/>
            <person name="Crosson S."/>
        </authorList>
    </citation>
    <scope>NUCLEOTIDE SEQUENCE [LARGE SCALE GENOMIC DNA]</scope>
    <source>
        <strain>NA1000 / CB15N</strain>
    </source>
</reference>
<evidence type="ECO:0000255" key="1">
    <source>
        <dbReference type="HAMAP-Rule" id="MF_01321"/>
    </source>
</evidence>
<accession>B8GZW7</accession>
<dbReference type="EC" id="2.7.7.6" evidence="1"/>
<dbReference type="EMBL" id="CP001340">
    <property type="protein sequence ID" value="ACL94001.1"/>
    <property type="molecule type" value="Genomic_DNA"/>
</dbReference>
<dbReference type="RefSeq" id="WP_010918390.1">
    <property type="nucleotide sequence ID" value="NC_011916.1"/>
</dbReference>
<dbReference type="RefSeq" id="YP_002515909.1">
    <property type="nucleotide sequence ID" value="NC_011916.1"/>
</dbReference>
<dbReference type="PDB" id="7YE1">
    <property type="method" value="EM"/>
    <property type="resolution" value="3.70 A"/>
    <property type="chains" value="C=1-1356"/>
</dbReference>
<dbReference type="PDB" id="7YE2">
    <property type="method" value="EM"/>
    <property type="resolution" value="3.80 A"/>
    <property type="chains" value="C=1-1356"/>
</dbReference>
<dbReference type="PDBsum" id="7YE1"/>
<dbReference type="PDBsum" id="7YE2"/>
<dbReference type="EMDB" id="EMD-33761"/>
<dbReference type="EMDB" id="EMD-33762"/>
<dbReference type="SMR" id="B8GZW7"/>
<dbReference type="GeneID" id="7332226"/>
<dbReference type="KEGG" id="ccs:CCNA_00536"/>
<dbReference type="PATRIC" id="fig|565050.3.peg.529"/>
<dbReference type="HOGENOM" id="CLU_000524_4_0_5"/>
<dbReference type="OrthoDB" id="9803954at2"/>
<dbReference type="PhylomeDB" id="B8GZW7"/>
<dbReference type="Proteomes" id="UP000001364">
    <property type="component" value="Chromosome"/>
</dbReference>
<dbReference type="GO" id="GO:0000428">
    <property type="term" value="C:DNA-directed RNA polymerase complex"/>
    <property type="evidence" value="ECO:0007669"/>
    <property type="project" value="UniProtKB-KW"/>
</dbReference>
<dbReference type="GO" id="GO:0003677">
    <property type="term" value="F:DNA binding"/>
    <property type="evidence" value="ECO:0007669"/>
    <property type="project" value="UniProtKB-UniRule"/>
</dbReference>
<dbReference type="GO" id="GO:0003899">
    <property type="term" value="F:DNA-directed RNA polymerase activity"/>
    <property type="evidence" value="ECO:0007669"/>
    <property type="project" value="UniProtKB-UniRule"/>
</dbReference>
<dbReference type="GO" id="GO:0032549">
    <property type="term" value="F:ribonucleoside binding"/>
    <property type="evidence" value="ECO:0007669"/>
    <property type="project" value="InterPro"/>
</dbReference>
<dbReference type="GO" id="GO:0006351">
    <property type="term" value="P:DNA-templated transcription"/>
    <property type="evidence" value="ECO:0007669"/>
    <property type="project" value="UniProtKB-UniRule"/>
</dbReference>
<dbReference type="CDD" id="cd00653">
    <property type="entry name" value="RNA_pol_B_RPB2"/>
    <property type="match status" value="1"/>
</dbReference>
<dbReference type="FunFam" id="3.90.1800.10:FF:000001">
    <property type="entry name" value="DNA-directed RNA polymerase subunit beta"/>
    <property type="match status" value="1"/>
</dbReference>
<dbReference type="Gene3D" id="2.40.50.100">
    <property type="match status" value="1"/>
</dbReference>
<dbReference type="Gene3D" id="2.40.50.150">
    <property type="match status" value="1"/>
</dbReference>
<dbReference type="Gene3D" id="3.90.1100.10">
    <property type="match status" value="2"/>
</dbReference>
<dbReference type="Gene3D" id="2.30.150.10">
    <property type="entry name" value="DNA-directed RNA polymerase, beta subunit, external 1 domain"/>
    <property type="match status" value="1"/>
</dbReference>
<dbReference type="Gene3D" id="2.40.270.10">
    <property type="entry name" value="DNA-directed RNA polymerase, subunit 2, domain 6"/>
    <property type="match status" value="1"/>
</dbReference>
<dbReference type="Gene3D" id="3.90.1800.10">
    <property type="entry name" value="RNA polymerase alpha subunit dimerisation domain"/>
    <property type="match status" value="1"/>
</dbReference>
<dbReference type="Gene3D" id="3.90.1110.10">
    <property type="entry name" value="RNA polymerase Rpb2, domain 2"/>
    <property type="match status" value="1"/>
</dbReference>
<dbReference type="HAMAP" id="MF_01321">
    <property type="entry name" value="RNApol_bact_RpoB"/>
    <property type="match status" value="1"/>
</dbReference>
<dbReference type="InterPro" id="IPR042107">
    <property type="entry name" value="DNA-dir_RNA_pol_bsu_ext_1_sf"/>
</dbReference>
<dbReference type="InterPro" id="IPR019462">
    <property type="entry name" value="DNA-dir_RNA_pol_bsu_external_1"/>
</dbReference>
<dbReference type="InterPro" id="IPR015712">
    <property type="entry name" value="DNA-dir_RNA_pol_su2"/>
</dbReference>
<dbReference type="InterPro" id="IPR007120">
    <property type="entry name" value="DNA-dir_RNAP_su2_dom"/>
</dbReference>
<dbReference type="InterPro" id="IPR037033">
    <property type="entry name" value="DNA-dir_RNAP_su2_hyb_sf"/>
</dbReference>
<dbReference type="InterPro" id="IPR010243">
    <property type="entry name" value="RNA_pol_bsu_bac"/>
</dbReference>
<dbReference type="InterPro" id="IPR007121">
    <property type="entry name" value="RNA_pol_bsu_CS"/>
</dbReference>
<dbReference type="InterPro" id="IPR007644">
    <property type="entry name" value="RNA_pol_bsu_protrusion"/>
</dbReference>
<dbReference type="InterPro" id="IPR007642">
    <property type="entry name" value="RNA_pol_Rpb2_2"/>
</dbReference>
<dbReference type="InterPro" id="IPR037034">
    <property type="entry name" value="RNA_pol_Rpb2_2_sf"/>
</dbReference>
<dbReference type="InterPro" id="IPR007645">
    <property type="entry name" value="RNA_pol_Rpb2_3"/>
</dbReference>
<dbReference type="InterPro" id="IPR007641">
    <property type="entry name" value="RNA_pol_Rpb2_7"/>
</dbReference>
<dbReference type="InterPro" id="IPR014724">
    <property type="entry name" value="RNA_pol_RPB2_OB-fold"/>
</dbReference>
<dbReference type="NCBIfam" id="NF001616">
    <property type="entry name" value="PRK00405.1"/>
    <property type="match status" value="1"/>
</dbReference>
<dbReference type="NCBIfam" id="TIGR02013">
    <property type="entry name" value="rpoB"/>
    <property type="match status" value="1"/>
</dbReference>
<dbReference type="PANTHER" id="PTHR20856">
    <property type="entry name" value="DNA-DIRECTED RNA POLYMERASE I SUBUNIT 2"/>
    <property type="match status" value="1"/>
</dbReference>
<dbReference type="Pfam" id="PF04563">
    <property type="entry name" value="RNA_pol_Rpb2_1"/>
    <property type="match status" value="1"/>
</dbReference>
<dbReference type="Pfam" id="PF04561">
    <property type="entry name" value="RNA_pol_Rpb2_2"/>
    <property type="match status" value="2"/>
</dbReference>
<dbReference type="Pfam" id="PF04565">
    <property type="entry name" value="RNA_pol_Rpb2_3"/>
    <property type="match status" value="1"/>
</dbReference>
<dbReference type="Pfam" id="PF10385">
    <property type="entry name" value="RNA_pol_Rpb2_45"/>
    <property type="match status" value="1"/>
</dbReference>
<dbReference type="Pfam" id="PF00562">
    <property type="entry name" value="RNA_pol_Rpb2_6"/>
    <property type="match status" value="1"/>
</dbReference>
<dbReference type="Pfam" id="PF04560">
    <property type="entry name" value="RNA_pol_Rpb2_7"/>
    <property type="match status" value="1"/>
</dbReference>
<dbReference type="SUPFAM" id="SSF64484">
    <property type="entry name" value="beta and beta-prime subunits of DNA dependent RNA-polymerase"/>
    <property type="match status" value="1"/>
</dbReference>
<dbReference type="PROSITE" id="PS01166">
    <property type="entry name" value="RNA_POL_BETA"/>
    <property type="match status" value="1"/>
</dbReference>
<gene>
    <name evidence="1" type="primary">rpoB</name>
    <name type="ordered locus">CCNA_00536</name>
</gene>
<name>RPOB_CAUVN</name>
<proteinExistence type="evidence at protein level"/>
<sequence length="1356" mass="150890">MAQSFTGKKRIRKSFGRIPEAVQMPNLIEVQRSSYEQFLQRETRPGLRRDEGVEAVFKSVFPIKDFNERAVLEYVSYEFEEPKYDVEECIQRDMTFAAPLKVKLRLIVFETEEETGARSVKDIKEQDVYMGDIPLMTDKGTFIVNGTERVIVSQMHRSPGVFFDHDKGKTHASGKLLFAARVIPYRGSWLDFEFDAKDIVYVRIDRRRKLPATTFLYALGMDGEEILTTFYDVVPFEKRSGGWATPYKPERWRGVKPEFPLVDADTGEEVAPAGTKITARQAKKFADGGLKTLLLAPEALTGRYLARDAVNMATGEIYAEAGDELDVTSIQALADQGFSTIDVLDIDHVTVGAYMRNTLRVDKNAIREDALFDIYRVMRPGEPPTVEAAEAMFKSLFFDAERYDLSSVGRVKMNMRLEQDVSDEVRILRKEDVLAVLKVLVGLRDGRGEIDDIDNLGNRRVRSVGELLENQYRVGLLRMERAIKERMSSVDIDTVMPHDLINAKPAAAAVREFFGSSQLSQFMDQTNPLSEITHKRRLSALGPGGLTRERAGFEVRDVHPTHYGRICPIETPEGPNIGLINSLATHARVNKYGFIESPYRRVKDGKPQDEVVYMSAMEESKHVIAQSNIKVAEGEIVEDLVPGRINGEPTLLQKETVDLMDVSPRQVVSVAAALIPFLENDDANRALMGSNMQRQAVPLVQSDAPLVGTGMEAVVARDSGAVVIAKRTGVVEQIDGTRIVIRATEETDPARSGVDIYRMSKFQRSNQSTCINQRPLVKVGDRIVAGDIIADGPSTELGELALGRNALVAFMPWNGYNFEDSILISERIVRDDVFTSIHIEEFEVMARDTKLGPEEITRDIPNVGEEALRNLDEAGIVAIGAEVQPGDILVGKVTPKGESPMTPEEKLLRAIFGEKASDVRDTSLRLPPGVAGTIVDVRVFNRHGVDKDERALAIERAEIDRLGKDRDDEFAILNRNISGRLKELLIGKVALSGPKGLSRGEITAEGLAQVASGLWWQIALEDEKAMGELESLRRLFDENRKRLDRRFEDKVDKLQRGDELPPGVMKMVKVFVAVKRKLQPGDKMAGRHGNKGVISRILPIEDMPFLADGTHVDVVLNPLGVPSRMNVGQIFETHLGWACANLGKQITNLLEDWQQGGQKQALVERLTEIYGPDEELPDTEEGLVELARNLGKGVPIATPVFDGARMDDIEGHLEMAGVNKSGQSILFDGLTGEQFKRPVTVGYIYMLKLHHLVDDKIHARSIGPYSLVTQQPLGGKAQFGGQRFGEMEVWALEAYGAAYTLQEMLTVKSDDVAGRTKVYESIVRGDDTFEAGIPESFNVLVKEMRSLGLNVELENS</sequence>
<feature type="chain" id="PRO_1000165797" description="DNA-directed RNA polymerase subunit beta">
    <location>
        <begin position="1"/>
        <end position="1356"/>
    </location>
</feature>